<accession>Q64RZ8</accession>
<organism>
    <name type="scientific">Bacteroides fragilis (strain YCH46)</name>
    <dbReference type="NCBI Taxonomy" id="295405"/>
    <lineage>
        <taxon>Bacteria</taxon>
        <taxon>Pseudomonadati</taxon>
        <taxon>Bacteroidota</taxon>
        <taxon>Bacteroidia</taxon>
        <taxon>Bacteroidales</taxon>
        <taxon>Bacteroidaceae</taxon>
        <taxon>Bacteroides</taxon>
    </lineage>
</organism>
<gene>
    <name evidence="1" type="primary">murB</name>
    <name type="ordered locus">BF2985</name>
</gene>
<sequence>MEQKYSLLSHNTFGIDVSAACFLEYASVDELRGLIGSGRVTSPYLHIGGGSNLLFTKDYEGTILHSRIGGVEVVAETDDDIVVRVGAGVVWDDFVDYCVQRHWYGVENLSLIPGEVGASAVQNIGAYGVEVKDLIVRVETLNIEGKEHVYDVTECGYSYRDSIFKRPENKSVFVTYVSFRLSKREHYTLDYGTIRRELEKYPGVTLDVVRRVIIAIREEKLPDPRVMGNAGSFFMNPIVGREQFEALQAEYPQMPFYEIDTDRVKIPAGWMIDQCGWKGKALGPAAVHDKQALVLVNRGGAKGADVIALSDAVRASVRAKFGIDIHPEVNFI</sequence>
<protein>
    <recommendedName>
        <fullName evidence="1">UDP-N-acetylenolpyruvoylglucosamine reductase</fullName>
        <ecNumber evidence="1">1.3.1.98</ecNumber>
    </recommendedName>
    <alternativeName>
        <fullName evidence="1">UDP-N-acetylmuramate dehydrogenase</fullName>
    </alternativeName>
</protein>
<proteinExistence type="inferred from homology"/>
<keyword id="KW-0131">Cell cycle</keyword>
<keyword id="KW-0132">Cell division</keyword>
<keyword id="KW-0133">Cell shape</keyword>
<keyword id="KW-0961">Cell wall biogenesis/degradation</keyword>
<keyword id="KW-0963">Cytoplasm</keyword>
<keyword id="KW-0274">FAD</keyword>
<keyword id="KW-0285">Flavoprotein</keyword>
<keyword id="KW-0521">NADP</keyword>
<keyword id="KW-0560">Oxidoreductase</keyword>
<keyword id="KW-0573">Peptidoglycan synthesis</keyword>
<name>MURB_BACFR</name>
<reference key="1">
    <citation type="journal article" date="2004" name="Proc. Natl. Acad. Sci. U.S.A.">
        <title>Genomic analysis of Bacteroides fragilis reveals extensive DNA inversions regulating cell surface adaptation.</title>
        <authorList>
            <person name="Kuwahara T."/>
            <person name="Yamashita A."/>
            <person name="Hirakawa H."/>
            <person name="Nakayama H."/>
            <person name="Toh H."/>
            <person name="Okada N."/>
            <person name="Kuhara S."/>
            <person name="Hattori M."/>
            <person name="Hayashi T."/>
            <person name="Ohnishi Y."/>
        </authorList>
    </citation>
    <scope>NUCLEOTIDE SEQUENCE [LARGE SCALE GENOMIC DNA]</scope>
    <source>
        <strain>YCH46</strain>
    </source>
</reference>
<dbReference type="EC" id="1.3.1.98" evidence="1"/>
<dbReference type="EMBL" id="AP006841">
    <property type="protein sequence ID" value="BAD49733.1"/>
    <property type="molecule type" value="Genomic_DNA"/>
</dbReference>
<dbReference type="RefSeq" id="WP_005788761.1">
    <property type="nucleotide sequence ID" value="NZ_UYXF01000004.1"/>
</dbReference>
<dbReference type="RefSeq" id="YP_100267.1">
    <property type="nucleotide sequence ID" value="NC_006347.1"/>
</dbReference>
<dbReference type="SMR" id="Q64RZ8"/>
<dbReference type="STRING" id="295405.BF2985"/>
<dbReference type="KEGG" id="bfr:BF2985"/>
<dbReference type="PATRIC" id="fig|295405.11.peg.2865"/>
<dbReference type="HOGENOM" id="CLU_035304_0_0_10"/>
<dbReference type="OrthoDB" id="9804753at2"/>
<dbReference type="UniPathway" id="UPA00219"/>
<dbReference type="Proteomes" id="UP000002197">
    <property type="component" value="Chromosome"/>
</dbReference>
<dbReference type="GO" id="GO:0005829">
    <property type="term" value="C:cytosol"/>
    <property type="evidence" value="ECO:0007669"/>
    <property type="project" value="TreeGrafter"/>
</dbReference>
<dbReference type="GO" id="GO:0071949">
    <property type="term" value="F:FAD binding"/>
    <property type="evidence" value="ECO:0007669"/>
    <property type="project" value="InterPro"/>
</dbReference>
<dbReference type="GO" id="GO:0008762">
    <property type="term" value="F:UDP-N-acetylmuramate dehydrogenase activity"/>
    <property type="evidence" value="ECO:0007669"/>
    <property type="project" value="UniProtKB-UniRule"/>
</dbReference>
<dbReference type="GO" id="GO:0051301">
    <property type="term" value="P:cell division"/>
    <property type="evidence" value="ECO:0007669"/>
    <property type="project" value="UniProtKB-KW"/>
</dbReference>
<dbReference type="GO" id="GO:0071555">
    <property type="term" value="P:cell wall organization"/>
    <property type="evidence" value="ECO:0007669"/>
    <property type="project" value="UniProtKB-KW"/>
</dbReference>
<dbReference type="GO" id="GO:0009252">
    <property type="term" value="P:peptidoglycan biosynthetic process"/>
    <property type="evidence" value="ECO:0007669"/>
    <property type="project" value="UniProtKB-UniRule"/>
</dbReference>
<dbReference type="GO" id="GO:0008360">
    <property type="term" value="P:regulation of cell shape"/>
    <property type="evidence" value="ECO:0007669"/>
    <property type="project" value="UniProtKB-KW"/>
</dbReference>
<dbReference type="Gene3D" id="3.30.465.10">
    <property type="match status" value="1"/>
</dbReference>
<dbReference type="Gene3D" id="3.90.78.10">
    <property type="entry name" value="UDP-N-acetylenolpyruvoylglucosamine reductase, C-terminal domain"/>
    <property type="match status" value="1"/>
</dbReference>
<dbReference type="Gene3D" id="3.30.43.10">
    <property type="entry name" value="Uridine Diphospho-n-acetylenolpyruvylglucosamine Reductase, domain 2"/>
    <property type="match status" value="1"/>
</dbReference>
<dbReference type="HAMAP" id="MF_00037">
    <property type="entry name" value="MurB"/>
    <property type="match status" value="1"/>
</dbReference>
<dbReference type="InterPro" id="IPR016166">
    <property type="entry name" value="FAD-bd_PCMH"/>
</dbReference>
<dbReference type="InterPro" id="IPR036318">
    <property type="entry name" value="FAD-bd_PCMH-like_sf"/>
</dbReference>
<dbReference type="InterPro" id="IPR016167">
    <property type="entry name" value="FAD-bd_PCMH_sub1"/>
</dbReference>
<dbReference type="InterPro" id="IPR016169">
    <property type="entry name" value="FAD-bd_PCMH_sub2"/>
</dbReference>
<dbReference type="InterPro" id="IPR003170">
    <property type="entry name" value="MurB"/>
</dbReference>
<dbReference type="InterPro" id="IPR011601">
    <property type="entry name" value="MurB_C"/>
</dbReference>
<dbReference type="InterPro" id="IPR036635">
    <property type="entry name" value="MurB_C_sf"/>
</dbReference>
<dbReference type="InterPro" id="IPR006094">
    <property type="entry name" value="Oxid_FAD_bind_N"/>
</dbReference>
<dbReference type="NCBIfam" id="TIGR00179">
    <property type="entry name" value="murB"/>
    <property type="match status" value="1"/>
</dbReference>
<dbReference type="NCBIfam" id="NF000755">
    <property type="entry name" value="PRK00046.1"/>
    <property type="match status" value="1"/>
</dbReference>
<dbReference type="PANTHER" id="PTHR21071">
    <property type="entry name" value="UDP-N-ACETYLENOLPYRUVOYLGLUCOSAMINE REDUCTASE"/>
    <property type="match status" value="1"/>
</dbReference>
<dbReference type="PANTHER" id="PTHR21071:SF4">
    <property type="entry name" value="UDP-N-ACETYLENOLPYRUVOYLGLUCOSAMINE REDUCTASE"/>
    <property type="match status" value="1"/>
</dbReference>
<dbReference type="Pfam" id="PF01565">
    <property type="entry name" value="FAD_binding_4"/>
    <property type="match status" value="1"/>
</dbReference>
<dbReference type="Pfam" id="PF02873">
    <property type="entry name" value="MurB_C"/>
    <property type="match status" value="1"/>
</dbReference>
<dbReference type="SUPFAM" id="SSF56176">
    <property type="entry name" value="FAD-binding/transporter-associated domain-like"/>
    <property type="match status" value="1"/>
</dbReference>
<dbReference type="SUPFAM" id="SSF56194">
    <property type="entry name" value="Uridine diphospho-N-Acetylenolpyruvylglucosamine reductase, MurB, C-terminal domain"/>
    <property type="match status" value="1"/>
</dbReference>
<dbReference type="PROSITE" id="PS51387">
    <property type="entry name" value="FAD_PCMH"/>
    <property type="match status" value="1"/>
</dbReference>
<evidence type="ECO:0000255" key="1">
    <source>
        <dbReference type="HAMAP-Rule" id="MF_00037"/>
    </source>
</evidence>
<feature type="chain" id="PRO_0000224662" description="UDP-N-acetylenolpyruvoylglucosamine reductase">
    <location>
        <begin position="1"/>
        <end position="332"/>
    </location>
</feature>
<feature type="domain" description="FAD-binding PCMH-type" evidence="1">
    <location>
        <begin position="15"/>
        <end position="184"/>
    </location>
</feature>
<feature type="active site" evidence="1">
    <location>
        <position position="160"/>
    </location>
</feature>
<feature type="active site" description="Proton donor" evidence="1">
    <location>
        <position position="232"/>
    </location>
</feature>
<feature type="active site" evidence="1">
    <location>
        <position position="328"/>
    </location>
</feature>
<comment type="function">
    <text evidence="1">Cell wall formation.</text>
</comment>
<comment type="catalytic activity">
    <reaction evidence="1">
        <text>UDP-N-acetyl-alpha-D-muramate + NADP(+) = UDP-N-acetyl-3-O-(1-carboxyvinyl)-alpha-D-glucosamine + NADPH + H(+)</text>
        <dbReference type="Rhea" id="RHEA:12248"/>
        <dbReference type="ChEBI" id="CHEBI:15378"/>
        <dbReference type="ChEBI" id="CHEBI:57783"/>
        <dbReference type="ChEBI" id="CHEBI:58349"/>
        <dbReference type="ChEBI" id="CHEBI:68483"/>
        <dbReference type="ChEBI" id="CHEBI:70757"/>
        <dbReference type="EC" id="1.3.1.98"/>
    </reaction>
</comment>
<comment type="cofactor">
    <cofactor evidence="1">
        <name>FAD</name>
        <dbReference type="ChEBI" id="CHEBI:57692"/>
    </cofactor>
</comment>
<comment type="pathway">
    <text evidence="1">Cell wall biogenesis; peptidoglycan biosynthesis.</text>
</comment>
<comment type="subcellular location">
    <subcellularLocation>
        <location evidence="1">Cytoplasm</location>
    </subcellularLocation>
</comment>
<comment type="similarity">
    <text evidence="1">Belongs to the MurB family.</text>
</comment>